<keyword id="KW-0148">Chlorophyll</keyword>
<keyword id="KW-0157">Chromophore</keyword>
<keyword id="KW-0472">Membrane</keyword>
<keyword id="KW-0602">Photosynthesis</keyword>
<keyword id="KW-0603">Photosystem I</keyword>
<keyword id="KW-0604">Photosystem II</keyword>
<keyword id="KW-1185">Reference proteome</keyword>
<keyword id="KW-0793">Thylakoid</keyword>
<keyword id="KW-0812">Transmembrane</keyword>
<keyword id="KW-1133">Transmembrane helix</keyword>
<gene>
    <name type="primary">pcbD</name>
    <name type="ordered locus">Pro_1167</name>
</gene>
<evidence type="ECO:0000250" key="1"/>
<evidence type="ECO:0000250" key="2">
    <source>
        <dbReference type="UniProtKB" id="Q6Q972"/>
    </source>
</evidence>
<evidence type="ECO:0000255" key="3"/>
<evidence type="ECO:0000269" key="4">
    <source>
    </source>
</evidence>
<evidence type="ECO:0000269" key="5">
    <source>
    </source>
</evidence>
<evidence type="ECO:0000269" key="6">
    <source ref="3"/>
</evidence>
<evidence type="ECO:0000303" key="7">
    <source>
    </source>
</evidence>
<evidence type="ECO:0000303" key="8">
    <source>
    </source>
</evidence>
<evidence type="ECO:0000303" key="9">
    <source>
    </source>
</evidence>
<evidence type="ECO:0000303" key="10">
    <source ref="3"/>
</evidence>
<evidence type="ECO:0000305" key="11"/>
<proteinExistence type="evidence at protein level"/>
<reference key="1">
    <citation type="journal article" date="2000" name="Proc. Natl. Acad. Sci. U.S.A.">
        <title>Multiplication of antenna genes as a major adaptation to low light in a marine prokaryote.</title>
        <authorList>
            <person name="Garczarek L."/>
            <person name="Hess W.R."/>
            <person name="Holtzendorff J."/>
            <person name="van der Staay G.W.M."/>
            <person name="Partensky F."/>
        </authorList>
    </citation>
    <scope>NUCLEOTIDE SEQUENCE [GENOMIC DNA]</scope>
    <scope>FUNCTION</scope>
    <source>
        <strain>SARG / CCMP1375 / SS120</strain>
    </source>
</reference>
<reference key="2">
    <citation type="journal article" date="2003" name="Proc. Natl. Acad. Sci. U.S.A.">
        <title>Genome sequence of the cyanobacterium Prochlorococcus marinus SS120, a nearly minimal oxyphototrophic genome.</title>
        <authorList>
            <person name="Dufresne A."/>
            <person name="Salanoubat M."/>
            <person name="Partensky F."/>
            <person name="Artiguenave F."/>
            <person name="Axmann I.M."/>
            <person name="Barbe V."/>
            <person name="Duprat S."/>
            <person name="Galperin M.Y."/>
            <person name="Koonin E.V."/>
            <person name="Le Gall F."/>
            <person name="Makarova K.S."/>
            <person name="Ostrowski M."/>
            <person name="Oztas S."/>
            <person name="Robert C."/>
            <person name="Rogozin I.B."/>
            <person name="Scanlan D.J."/>
            <person name="Tandeau de Marsac N."/>
            <person name="Weissenbach J."/>
            <person name="Wincker P."/>
            <person name="Wolf Y.I."/>
            <person name="Hess W.R."/>
        </authorList>
    </citation>
    <scope>NUCLEOTIDE SEQUENCE [LARGE SCALE GENOMIC DNA]</scope>
    <source>
        <strain>SARG / CCMP1375 / SS120</strain>
    </source>
</reference>
<reference key="3">
    <citation type="journal article" date="1997" name="Photosyn. Res.">
        <title>The divinyl-chlorophyll a/b-protein complexes of two strains of the oxyphototrophic marine prokaryote Prochlorococcus -- characterization and response to changes in growth irradiance.</title>
        <authorList>
            <person name="Partensky F."/>
            <person name="La Roche J."/>
            <person name="Wyman K."/>
            <person name="Falkowski P.G."/>
        </authorList>
    </citation>
    <scope>FUNCTION</scope>
    <scope>CHLOROPHYLL-BINDING</scope>
    <scope>COFACTOR</scope>
    <scope>SUBUNIT</scope>
    <scope>SUBCELLULAR LOCATION</scope>
    <source>
        <strain>SARG / CCMP1375 / SS120</strain>
    </source>
</reference>
<reference key="4">
    <citation type="journal article" date="2001" name="Plant Mol. Biol.">
        <title>Expression and phylogeny of the multiple antenna genes of the low-light-adapted strain Prochlorococcus marinus SS120 (Oxyphotobacteria).</title>
        <authorList>
            <person name="Garczarek L."/>
            <person name="van der Staay G.W.M."/>
            <person name="Hess W.R."/>
            <person name="Le Gall F."/>
            <person name="Partensky F."/>
        </authorList>
    </citation>
    <scope>INDUCTION</scope>
    <source>
        <strain>SARG / CCMP1375 / SS120</strain>
    </source>
</reference>
<reference key="5">
    <citation type="journal article" date="2003" name="Nature">
        <title>Low-light-adapted Prochlorococcus species possess specific antennae for each photosystem.</title>
        <authorList>
            <person name="Bibby T.S."/>
            <person name="Mary I."/>
            <person name="Nield J."/>
            <person name="Partensky F."/>
            <person name="Barber J."/>
        </authorList>
    </citation>
    <scope>REPRESSION UNDER IRON-STARVATION</scope>
    <source>
        <strain>SARG / CCMP1375 / SS120</strain>
    </source>
</reference>
<sequence length="361" mass="39847">MQTYGNPEVTYGWWAGNSVVTNRSGRFIASHVGHTGLICFAAGGSTLWELARYNPEIPMGHQSSLFLAHLASIGIGFDEAGAWTGVGVATIAIVHLILSMVYGGGGLLHGILFDENVEDSEVLQAKKFKLEWNNPDNQTFILGHHLIFMGVACAWFVEWARIHGIYDPALGAIRQVNYNLDLSMIWQRQFDFITIDSLEDVMGGHAFLAFAEITGGAFHIVAGSTPWEDKKLGEWSKFKGSELLSAEAVLSWSLAGIGWMAIVAAFWCASNTTVYPEAWYGEPLQFKFAISPYWVDTGDLSDATAFWGHSARAALTNVHYYLGFFFLQGHFWHALRALGFNFKNVTASIGNEQKATFTIKS</sequence>
<accession>Q7VBC8</accession>
<accession>Q9L8M4</accession>
<comment type="function">
    <text evidence="2 7 10">The antenna complex functions as a light receptor, it captures and delivers excitation energy to photosystems II and I. The Prochlorales pcb genes are not related to higher plant LHCs.</text>
</comment>
<comment type="cofactor">
    <cofactor evidence="10">
        <name>divinyl chlorophyll a</name>
        <dbReference type="ChEBI" id="CHEBI:73095"/>
    </cofactor>
</comment>
<comment type="cofactor">
    <cofactor evidence="10">
        <name>divinyl chlorophyll b</name>
        <dbReference type="ChEBI" id="CHEBI:73096"/>
    </cofactor>
</comment>
<comment type="subunit">
    <text evidence="6">The antenna complex consists of divinyl chlorophylls (a and b) and divinyl chlorophyll a/b binding proteins and binds more divinyl chlorophyll b than does the antenna complex from high-light-adapted Prochlorococcus.</text>
</comment>
<comment type="subcellular location">
    <subcellularLocation>
        <location evidence="6">Cellular thylakoid membrane</location>
        <topology evidence="1">Multi-pass membrane protein</topology>
    </subcellularLocation>
</comment>
<comment type="induction">
    <text evidence="4 5">This transcript is moderately expressed at low and high light levels and is expressed somewhat more at 16 and 45 umol blue light/m2/s. The whole antenna complex is most highly expressed under low light; as the light levels increase antenna complex levels decrease. Thus at least in this strain the amount of antenna complex is controlled mostly at a post-transcriptional level. Transcription decreases upon iron starvation.</text>
</comment>
<comment type="miscellaneous">
    <text evidence="8 9">This low-light-adapted strain contains 8 pcb genes.</text>
</comment>
<comment type="similarity">
    <text evidence="11">Belongs to the PsbB/PsbC family. IsiA/Pcb subfamily.</text>
</comment>
<dbReference type="EMBL" id="AF198527">
    <property type="protein sequence ID" value="AAF61302.1"/>
    <property type="molecule type" value="Genomic_DNA"/>
</dbReference>
<dbReference type="EMBL" id="AE017126">
    <property type="protein sequence ID" value="AAQ00212.1"/>
    <property type="molecule type" value="Genomic_DNA"/>
</dbReference>
<dbReference type="RefSeq" id="NP_875559.1">
    <property type="nucleotide sequence ID" value="NC_005042.1"/>
</dbReference>
<dbReference type="RefSeq" id="WP_011125319.1">
    <property type="nucleotide sequence ID" value="NC_005042.1"/>
</dbReference>
<dbReference type="SMR" id="Q7VBC8"/>
<dbReference type="STRING" id="167539.Pro_1167"/>
<dbReference type="EnsemblBacteria" id="AAQ00212">
    <property type="protein sequence ID" value="AAQ00212"/>
    <property type="gene ID" value="Pro_1167"/>
</dbReference>
<dbReference type="KEGG" id="pma:Pro_1167"/>
<dbReference type="PATRIC" id="fig|167539.5.peg.1221"/>
<dbReference type="eggNOG" id="ENOG5032G4N">
    <property type="taxonomic scope" value="Bacteria"/>
</dbReference>
<dbReference type="HOGENOM" id="CLU_028310_0_0_3"/>
<dbReference type="OrthoDB" id="9429529at2"/>
<dbReference type="Proteomes" id="UP000001420">
    <property type="component" value="Chromosome"/>
</dbReference>
<dbReference type="GO" id="GO:0009522">
    <property type="term" value="C:photosystem I"/>
    <property type="evidence" value="ECO:0007669"/>
    <property type="project" value="UniProtKB-KW"/>
</dbReference>
<dbReference type="GO" id="GO:0009523">
    <property type="term" value="C:photosystem II"/>
    <property type="evidence" value="ECO:0007669"/>
    <property type="project" value="UniProtKB-KW"/>
</dbReference>
<dbReference type="GO" id="GO:0031676">
    <property type="term" value="C:plasma membrane-derived thylakoid membrane"/>
    <property type="evidence" value="ECO:0007669"/>
    <property type="project" value="UniProtKB-SubCell"/>
</dbReference>
<dbReference type="GO" id="GO:0016168">
    <property type="term" value="F:chlorophyll binding"/>
    <property type="evidence" value="ECO:0007669"/>
    <property type="project" value="UniProtKB-KW"/>
</dbReference>
<dbReference type="GO" id="GO:0009767">
    <property type="term" value="P:photosynthetic electron transport chain"/>
    <property type="evidence" value="ECO:0007669"/>
    <property type="project" value="InterPro"/>
</dbReference>
<dbReference type="InterPro" id="IPR000932">
    <property type="entry name" value="PS_antenna-like"/>
</dbReference>
<dbReference type="InterPro" id="IPR036001">
    <property type="entry name" value="PS_II_antenna-like_sf"/>
</dbReference>
<dbReference type="NCBIfam" id="TIGR03041">
    <property type="entry name" value="PS_antenn_a_b"/>
    <property type="match status" value="1"/>
</dbReference>
<dbReference type="Pfam" id="PF00421">
    <property type="entry name" value="PSII"/>
    <property type="match status" value="1"/>
</dbReference>
<dbReference type="SUPFAM" id="SSF161077">
    <property type="entry name" value="Photosystem II antenna protein-like"/>
    <property type="match status" value="1"/>
</dbReference>
<feature type="chain" id="PRO_0000077541" description="Divinyl chlorophyll a/b light-harvesting protein PcbD">
    <location>
        <begin position="1"/>
        <end position="361"/>
    </location>
</feature>
<feature type="transmembrane region" description="Helical" evidence="3">
    <location>
        <begin position="27"/>
        <end position="47"/>
    </location>
</feature>
<feature type="transmembrane region" description="Helical" evidence="3">
    <location>
        <begin position="93"/>
        <end position="113"/>
    </location>
</feature>
<feature type="transmembrane region" description="Helical" evidence="3">
    <location>
        <begin position="140"/>
        <end position="160"/>
    </location>
</feature>
<feature type="transmembrane region" description="Helical" evidence="3">
    <location>
        <begin position="201"/>
        <end position="221"/>
    </location>
</feature>
<feature type="transmembrane region" description="Helical" evidence="3">
    <location>
        <begin position="248"/>
        <end position="268"/>
    </location>
</feature>
<feature type="transmembrane region" description="Helical" evidence="3">
    <location>
        <begin position="315"/>
        <end position="335"/>
    </location>
</feature>
<feature type="sequence conflict" description="In Ref. 1; AAF61302." evidence="11" ref="1">
    <original>A</original>
    <variation>R</variation>
    <location>
        <position position="305"/>
    </location>
</feature>
<name>PCBD_PROMA</name>
<protein>
    <recommendedName>
        <fullName>Divinyl chlorophyll a/b light-harvesting protein PcbD</fullName>
    </recommendedName>
</protein>
<organism>
    <name type="scientific">Prochlorococcus marinus (strain SARG / CCMP1375 / SS120)</name>
    <dbReference type="NCBI Taxonomy" id="167539"/>
    <lineage>
        <taxon>Bacteria</taxon>
        <taxon>Bacillati</taxon>
        <taxon>Cyanobacteriota</taxon>
        <taxon>Cyanophyceae</taxon>
        <taxon>Synechococcales</taxon>
        <taxon>Prochlorococcaceae</taxon>
        <taxon>Prochlorococcus</taxon>
    </lineage>
</organism>